<name>DCTA_DELAS</name>
<keyword id="KW-0997">Cell inner membrane</keyword>
<keyword id="KW-1003">Cell membrane</keyword>
<keyword id="KW-0472">Membrane</keyword>
<keyword id="KW-1185">Reference proteome</keyword>
<keyword id="KW-0769">Symport</keyword>
<keyword id="KW-0812">Transmembrane</keyword>
<keyword id="KW-1133">Transmembrane helix</keyword>
<keyword id="KW-0813">Transport</keyword>
<comment type="function">
    <text evidence="1">Responsible for the transport of dicarboxylates such as succinate, fumarate, and malate from the periplasm across the membrane.</text>
</comment>
<comment type="subcellular location">
    <subcellularLocation>
        <location evidence="1">Cell inner membrane</location>
        <topology evidence="1">Multi-pass membrane protein</topology>
    </subcellularLocation>
</comment>
<comment type="similarity">
    <text evidence="1">Belongs to the dicarboxylate/amino acid:cation symporter (DAACS) (TC 2.A.23) family.</text>
</comment>
<dbReference type="EMBL" id="CP000884">
    <property type="protein sequence ID" value="ABX35561.1"/>
    <property type="molecule type" value="Genomic_DNA"/>
</dbReference>
<dbReference type="RefSeq" id="WP_012204771.1">
    <property type="nucleotide sequence ID" value="NC_010002.1"/>
</dbReference>
<dbReference type="SMR" id="A9BZG1"/>
<dbReference type="STRING" id="398578.Daci_2923"/>
<dbReference type="GeneID" id="24117112"/>
<dbReference type="KEGG" id="dac:Daci_2923"/>
<dbReference type="eggNOG" id="COG1301">
    <property type="taxonomic scope" value="Bacteria"/>
</dbReference>
<dbReference type="HOGENOM" id="CLU_019375_7_0_4"/>
<dbReference type="Proteomes" id="UP000000784">
    <property type="component" value="Chromosome"/>
</dbReference>
<dbReference type="GO" id="GO:0005886">
    <property type="term" value="C:plasma membrane"/>
    <property type="evidence" value="ECO:0007669"/>
    <property type="project" value="UniProtKB-SubCell"/>
</dbReference>
<dbReference type="GO" id="GO:0015138">
    <property type="term" value="F:fumarate transmembrane transporter activity"/>
    <property type="evidence" value="ECO:0007669"/>
    <property type="project" value="TreeGrafter"/>
</dbReference>
<dbReference type="GO" id="GO:0015366">
    <property type="term" value="F:malate:proton symporter activity"/>
    <property type="evidence" value="ECO:0007669"/>
    <property type="project" value="TreeGrafter"/>
</dbReference>
<dbReference type="GO" id="GO:0015141">
    <property type="term" value="F:succinate transmembrane transporter activity"/>
    <property type="evidence" value="ECO:0007669"/>
    <property type="project" value="TreeGrafter"/>
</dbReference>
<dbReference type="GO" id="GO:0070778">
    <property type="term" value="P:L-aspartate transmembrane transport"/>
    <property type="evidence" value="ECO:0007669"/>
    <property type="project" value="TreeGrafter"/>
</dbReference>
<dbReference type="FunFam" id="1.10.3860.10:FF:000001">
    <property type="entry name" value="C4-dicarboxylate transport protein"/>
    <property type="match status" value="1"/>
</dbReference>
<dbReference type="Gene3D" id="1.10.3860.10">
    <property type="entry name" value="Sodium:dicarboxylate symporter"/>
    <property type="match status" value="1"/>
</dbReference>
<dbReference type="HAMAP" id="MF_01300">
    <property type="entry name" value="C4_dicarb_transport"/>
    <property type="match status" value="1"/>
</dbReference>
<dbReference type="InterPro" id="IPR023954">
    <property type="entry name" value="C4_dicarb_transport"/>
</dbReference>
<dbReference type="InterPro" id="IPR001991">
    <property type="entry name" value="Na-dicarboxylate_symporter"/>
</dbReference>
<dbReference type="InterPro" id="IPR018107">
    <property type="entry name" value="Na-dicarboxylate_symporter_CS"/>
</dbReference>
<dbReference type="InterPro" id="IPR036458">
    <property type="entry name" value="Na:dicarbo_symporter_sf"/>
</dbReference>
<dbReference type="NCBIfam" id="NF002461">
    <property type="entry name" value="PRK01663.1"/>
    <property type="match status" value="1"/>
</dbReference>
<dbReference type="NCBIfam" id="NF009587">
    <property type="entry name" value="PRK13027.1"/>
    <property type="match status" value="1"/>
</dbReference>
<dbReference type="PANTHER" id="PTHR42865:SF1">
    <property type="entry name" value="AEROBIC C4-DICARBOXYLATE TRANSPORT PROTEIN"/>
    <property type="match status" value="1"/>
</dbReference>
<dbReference type="PANTHER" id="PTHR42865">
    <property type="entry name" value="PROTON/GLUTAMATE-ASPARTATE SYMPORTER"/>
    <property type="match status" value="1"/>
</dbReference>
<dbReference type="Pfam" id="PF00375">
    <property type="entry name" value="SDF"/>
    <property type="match status" value="1"/>
</dbReference>
<dbReference type="PRINTS" id="PR00173">
    <property type="entry name" value="EDTRNSPORT"/>
</dbReference>
<dbReference type="SUPFAM" id="SSF118215">
    <property type="entry name" value="Proton glutamate symport protein"/>
    <property type="match status" value="1"/>
</dbReference>
<dbReference type="PROSITE" id="PS00713">
    <property type="entry name" value="NA_DICARBOXYL_SYMP_1"/>
    <property type="match status" value="1"/>
</dbReference>
<dbReference type="PROSITE" id="PS00714">
    <property type="entry name" value="NA_DICARBOXYL_SYMP_2"/>
    <property type="match status" value="1"/>
</dbReference>
<organism>
    <name type="scientific">Delftia acidovorans (strain DSM 14801 / SPH-1)</name>
    <dbReference type="NCBI Taxonomy" id="398578"/>
    <lineage>
        <taxon>Bacteria</taxon>
        <taxon>Pseudomonadati</taxon>
        <taxon>Pseudomonadota</taxon>
        <taxon>Betaproteobacteria</taxon>
        <taxon>Burkholderiales</taxon>
        <taxon>Comamonadaceae</taxon>
        <taxon>Delftia</taxon>
    </lineage>
</organism>
<accession>A9BZG1</accession>
<feature type="chain" id="PRO_1000140449" description="C4-dicarboxylate transport protein">
    <location>
        <begin position="1"/>
        <end position="442"/>
    </location>
</feature>
<feature type="transmembrane region" description="Helical" evidence="1">
    <location>
        <begin position="19"/>
        <end position="39"/>
    </location>
</feature>
<feature type="transmembrane region" description="Helical" evidence="1">
    <location>
        <begin position="55"/>
        <end position="75"/>
    </location>
</feature>
<feature type="transmembrane region" description="Helical" evidence="1">
    <location>
        <begin position="90"/>
        <end position="110"/>
    </location>
</feature>
<feature type="transmembrane region" description="Helical" evidence="1">
    <location>
        <begin position="161"/>
        <end position="181"/>
    </location>
</feature>
<feature type="transmembrane region" description="Helical" evidence="1">
    <location>
        <begin position="199"/>
        <end position="219"/>
    </location>
</feature>
<feature type="transmembrane region" description="Helical" evidence="1">
    <location>
        <begin position="232"/>
        <end position="252"/>
    </location>
</feature>
<feature type="transmembrane region" description="Helical" evidence="1">
    <location>
        <begin position="318"/>
        <end position="338"/>
    </location>
</feature>
<feature type="transmembrane region" description="Helical" evidence="1">
    <location>
        <begin position="366"/>
        <end position="386"/>
    </location>
</feature>
<sequence length="442" mass="46607">MHAVPTHAASPERLPFYRQLYFQVVVAIVAGVLLGHFEPQYAEQFKPLGDAFIKLVKMIIAPVIFLTIVTGIAGMTHLRTVGRVFLKAMAYFLFFSTLALVVGMVVAHVVQPGAGMNINPADLDQAAVKGYVAKSHELTLTGFAMDIIPKTLVSPFVGDNILQVLFVAVLFGISLAMVGDAGKPVLNFLEALTAPVFKLVGILMKAAPLGAFGAIAFTIGKFGLGSLVNLAWLVGSFYITSLLFVVVVLGFVARLCGFSVLKLARYLKAELLLVLGTSSSESALPSLMQKMERAGCGKSVVGLVVPTGYSFNLDGTNIYMTLAALFIAQATNTHLTLGHEIALLLVAMLSSKGAAGVTGAGFITLAATLAVVPEVPVAGMALILGVDRFMSECRSLTNFMGNAVATVVVSRWENELDYSKLNAALDGEPVQALPAEAAAVKA</sequence>
<evidence type="ECO:0000255" key="1">
    <source>
        <dbReference type="HAMAP-Rule" id="MF_01300"/>
    </source>
</evidence>
<reference key="1">
    <citation type="submission" date="2007-11" db="EMBL/GenBank/DDBJ databases">
        <title>Complete sequence of Delftia acidovorans DSM 14801 / SPH-1.</title>
        <authorList>
            <person name="Copeland A."/>
            <person name="Lucas S."/>
            <person name="Lapidus A."/>
            <person name="Barry K."/>
            <person name="Glavina del Rio T."/>
            <person name="Dalin E."/>
            <person name="Tice H."/>
            <person name="Pitluck S."/>
            <person name="Lowry S."/>
            <person name="Clum A."/>
            <person name="Schmutz J."/>
            <person name="Larimer F."/>
            <person name="Land M."/>
            <person name="Hauser L."/>
            <person name="Kyrpides N."/>
            <person name="Kim E."/>
            <person name="Schleheck D."/>
            <person name="Richardson P."/>
        </authorList>
    </citation>
    <scope>NUCLEOTIDE SEQUENCE [LARGE SCALE GENOMIC DNA]</scope>
    <source>
        <strain>DSM 14801 / SPH-1</strain>
    </source>
</reference>
<gene>
    <name evidence="1" type="primary">dctA</name>
    <name type="ordered locus">Daci_2923</name>
</gene>
<proteinExistence type="inferred from homology"/>
<protein>
    <recommendedName>
        <fullName evidence="1">C4-dicarboxylate transport protein</fullName>
    </recommendedName>
</protein>